<comment type="function">
    <text evidence="7 8 11 13 14">Dual-specificity phosphatase. Required for centrosome separation and productive cytokinesis during cell division. Dephosphorylates SIRT2 around early anaphase. May dephosphorylate the APC subunit FZR1/CDH1, thereby promoting APC-FZR1 dependent degradation of mitotic cyclins and subsequent exit from mitosis. Required for normal hearing (PubMed:29293958).</text>
</comment>
<comment type="catalytic activity">
    <reaction evidence="4">
        <text>O-phospho-L-tyrosyl-[protein] + H2O = L-tyrosyl-[protein] + phosphate</text>
        <dbReference type="Rhea" id="RHEA:10684"/>
        <dbReference type="Rhea" id="RHEA-COMP:10136"/>
        <dbReference type="Rhea" id="RHEA-COMP:20101"/>
        <dbReference type="ChEBI" id="CHEBI:15377"/>
        <dbReference type="ChEBI" id="CHEBI:43474"/>
        <dbReference type="ChEBI" id="CHEBI:46858"/>
        <dbReference type="ChEBI" id="CHEBI:61978"/>
        <dbReference type="EC" id="3.1.3.48"/>
    </reaction>
</comment>
<comment type="catalytic activity">
    <reaction>
        <text>O-phospho-L-seryl-[protein] + H2O = L-seryl-[protein] + phosphate</text>
        <dbReference type="Rhea" id="RHEA:20629"/>
        <dbReference type="Rhea" id="RHEA-COMP:9863"/>
        <dbReference type="Rhea" id="RHEA-COMP:11604"/>
        <dbReference type="ChEBI" id="CHEBI:15377"/>
        <dbReference type="ChEBI" id="CHEBI:29999"/>
        <dbReference type="ChEBI" id="CHEBI:43474"/>
        <dbReference type="ChEBI" id="CHEBI:83421"/>
        <dbReference type="EC" id="3.1.3.16"/>
    </reaction>
</comment>
<comment type="catalytic activity">
    <reaction>
        <text>O-phospho-L-threonyl-[protein] + H2O = L-threonyl-[protein] + phosphate</text>
        <dbReference type="Rhea" id="RHEA:47004"/>
        <dbReference type="Rhea" id="RHEA-COMP:11060"/>
        <dbReference type="Rhea" id="RHEA-COMP:11605"/>
        <dbReference type="ChEBI" id="CHEBI:15377"/>
        <dbReference type="ChEBI" id="CHEBI:30013"/>
        <dbReference type="ChEBI" id="CHEBI:43474"/>
        <dbReference type="ChEBI" id="CHEBI:61977"/>
        <dbReference type="EC" id="3.1.3.16"/>
    </reaction>
</comment>
<comment type="subunit">
    <text evidence="9">Interacts with KIF20A, which is required to localize CDC14 to the midzone of the mitotic spindle.</text>
</comment>
<comment type="interaction">
    <interactant intactId="EBI-7851002">
        <id>Q9UNH5</id>
    </interactant>
    <interactant intactId="EBI-1166928">
        <id>Q8N5M1</id>
        <label>ATPAF2</label>
    </interactant>
    <organismsDiffer>false</organismsDiffer>
    <experiments>3</experiments>
</comment>
<comment type="interaction">
    <interactant intactId="EBI-7851002">
        <id>Q9UNH5</id>
    </interactant>
    <interactant intactId="EBI-725606">
        <id>Q9NWQ9</id>
        <label>C14orf119</label>
    </interactant>
    <organismsDiffer>false</organismsDiffer>
    <experiments>3</experiments>
</comment>
<comment type="subcellular location">
    <subcellularLocation>
        <location evidence="14">Nucleus</location>
    </subcellularLocation>
    <subcellularLocation>
        <location evidence="7 8">Cytoplasm</location>
        <location evidence="7 8">Cytoskeleton</location>
        <location evidence="7 8">Microtubule organizing center</location>
        <location evidence="7 8">Centrosome</location>
    </subcellularLocation>
    <subcellularLocation>
        <location evidence="7 9">Cytoplasm</location>
        <location evidence="7 9">Cytoskeleton</location>
        <location evidence="7 9">Spindle pole</location>
    </subcellularLocation>
    <subcellularLocation>
        <location evidence="9">Cytoplasm</location>
        <location evidence="9">Cytoskeleton</location>
        <location evidence="9">Spindle</location>
    </subcellularLocation>
    <subcellularLocation>
        <location evidence="2">Cell projection</location>
        <location evidence="2">Kinocilium</location>
    </subcellularLocation>
    <subcellularLocation>
        <location evidence="2">Cell projection</location>
        <location evidence="2">Stereocilium</location>
    </subcellularLocation>
    <text evidence="2 7 8 9">Centrosomal during interphase, released into the cytoplasm at the onset of mitosis. Subsequently localizes to the mitotic spindle pole and at the central spindle (PubMed:11901424, PubMed:12134069, PubMed:15263015). Present along both the transient kinocilia of developing cochlear hair cells and the persistent kinocilia of vestibular hair cells (By similarity).</text>
</comment>
<comment type="alternative products">
    <event type="alternative splicing"/>
    <isoform>
        <id>Q9UNH5-1</id>
        <name>1</name>
        <name>CDC14A1</name>
        <sequence type="displayed"/>
    </isoform>
    <isoform>
        <id>Q9UNH5-2</id>
        <name>2</name>
        <name>CDC14A2</name>
        <sequence type="described" ref="VSP_012037"/>
    </isoform>
    <isoform>
        <id>Q9UNH5-3</id>
        <name>3</name>
        <name>CDC14A3</name>
        <sequence type="described" ref="VSP_012035 VSP_012036"/>
    </isoform>
    <isoform>
        <id>Q9UNH5-4</id>
        <name>4</name>
        <name>CDC14A4</name>
        <sequence type="described" ref="VSP_012322 VSP_012323"/>
    </isoform>
    <isoform>
        <id>Q9UNH5-5</id>
        <name>5</name>
        <sequence type="described" ref="VSP_047597"/>
    </isoform>
</comment>
<comment type="domain">
    <text evidence="1">Composed of two structurally equivalent A and B domains that adopt a dual specificity protein phosphatase (DSP) fold.</text>
</comment>
<comment type="disease" evidence="12 13">
    <disease id="DI-05341">
        <name>Deafness, autosomal recessive, 32, with or without immotile sperm</name>
        <acronym>DFNB32</acronym>
        <description>A form of non-syndromic sensorineural hearing loss. Sensorineural deafness results from damage to the neural receptors of the inner ear, the nerve pathways to the brain, or the area of the brain that receives sound information. DFNB32 is characterized by prelingual, progressive, moderate to profound sensorineural deafness. Some affected men are infertile.</description>
        <dbReference type="MIM" id="608653"/>
    </disease>
    <text>The disease is caused by variants affecting the gene represented in this entry.</text>
</comment>
<comment type="similarity">
    <text evidence="19">Belongs to the protein-tyrosine phosphatase family. Non-receptor class CDC14 subfamily.</text>
</comment>
<comment type="sequence caution" evidence="19">
    <conflict type="frameshift">
        <sequence resource="EMBL-CDS" id="AAB88277"/>
    </conflict>
</comment>
<organism>
    <name type="scientific">Homo sapiens</name>
    <name type="common">Human</name>
    <dbReference type="NCBI Taxonomy" id="9606"/>
    <lineage>
        <taxon>Eukaryota</taxon>
        <taxon>Metazoa</taxon>
        <taxon>Chordata</taxon>
        <taxon>Craniata</taxon>
        <taxon>Vertebrata</taxon>
        <taxon>Euteleostomi</taxon>
        <taxon>Mammalia</taxon>
        <taxon>Eutheria</taxon>
        <taxon>Euarchontoglires</taxon>
        <taxon>Primates</taxon>
        <taxon>Haplorrhini</taxon>
        <taxon>Catarrhini</taxon>
        <taxon>Hominidae</taxon>
        <taxon>Homo</taxon>
    </lineage>
</organism>
<feature type="chain" id="PRO_0000094876" description="Dual specificity protein phosphatase CDC14A">
    <location>
        <begin position="1"/>
        <end position="594"/>
    </location>
</feature>
<feature type="domain" description="Tyrosine-protein phosphatase" evidence="3">
    <location>
        <begin position="179"/>
        <end position="336"/>
    </location>
</feature>
<feature type="region of interest" description="A">
    <location>
        <begin position="7"/>
        <end position="162"/>
    </location>
</feature>
<feature type="region of interest" description="Linker">
    <location>
        <begin position="163"/>
        <end position="176"/>
    </location>
</feature>
<feature type="region of interest" description="B">
    <location>
        <begin position="177"/>
        <end position="343"/>
    </location>
</feature>
<feature type="region of interest" description="Disordered" evidence="5">
    <location>
        <begin position="396"/>
        <end position="435"/>
    </location>
</feature>
<feature type="region of interest" description="Disordered" evidence="5">
    <location>
        <begin position="487"/>
        <end position="560"/>
    </location>
</feature>
<feature type="compositionally biased region" description="Polar residues" evidence="5">
    <location>
        <begin position="404"/>
        <end position="413"/>
    </location>
</feature>
<feature type="compositionally biased region" description="Polar residues" evidence="5">
    <location>
        <begin position="500"/>
        <end position="531"/>
    </location>
</feature>
<feature type="compositionally biased region" description="Low complexity" evidence="5">
    <location>
        <begin position="532"/>
        <end position="549"/>
    </location>
</feature>
<feature type="active site" description="Phosphocysteine intermediate" evidence="3">
    <location>
        <position position="278"/>
    </location>
</feature>
<feature type="modified residue" description="Phosphoserine" evidence="20">
    <location>
        <position position="484"/>
    </location>
</feature>
<feature type="modified residue" description="Phosphoserine" evidence="20">
    <location>
        <position position="583"/>
    </location>
</feature>
<feature type="splice variant" id="VSP_012322" description="In isoform 4." evidence="16">
    <original>RVENGDFNWIVPGKFLAF</original>
    <variation>VILFTPLKPTFLISKSIM</variation>
    <location>
        <begin position="174"/>
        <end position="191"/>
    </location>
</feature>
<feature type="splice variant" id="VSP_012323" description="In isoform 4." evidence="16">
    <location>
        <begin position="192"/>
        <end position="594"/>
    </location>
</feature>
<feature type="splice variant" id="VSP_012035" description="In isoform 3." evidence="16 17">
    <original>DNLE</original>
    <variation>VSFP</variation>
    <location>
        <begin position="380"/>
        <end position="383"/>
    </location>
</feature>
<feature type="splice variant" id="VSP_012036" description="In isoform 3." evidence="16 17">
    <location>
        <begin position="384"/>
        <end position="594"/>
    </location>
</feature>
<feature type="splice variant" id="VSP_012037" description="In isoform 2." evidence="17">
    <original>SLQSEYVHY</original>
    <variation>VSAQTPPPGPQNPECNFCALPSQPRLPPKKFNSAKEAF</variation>
    <location>
        <begin position="586"/>
        <end position="594"/>
    </location>
</feature>
<feature type="splice variant" id="VSP_047597" description="In isoform 5." evidence="18">
    <original>SLQSEYVHY</original>
    <variation>CSCLLLVFRKPFLGSPLLSLPISHL</variation>
    <location>
        <begin position="586"/>
        <end position="594"/>
    </location>
</feature>
<feature type="sequence variant" id="VAR_081127" description="In DFNB32." evidence="13">
    <location>
        <begin position="139"/>
        <end position="594"/>
    </location>
</feature>
<feature type="sequence variant" id="VAR_081128" description="In DFNB32; dbSNP:rs148737918." evidence="13">
    <original>R</original>
    <variation>G</variation>
    <location>
        <position position="312"/>
    </location>
</feature>
<feature type="sequence variant" id="VAR_081129" description="In DFNB32; dbSNP:rs369245990." evidence="13">
    <original>R</original>
    <variation>Q</variation>
    <location>
        <position position="312"/>
    </location>
</feature>
<feature type="sequence variant" id="VAR_081130" description="In DFNB32; dbSNP:rs1339709390." evidence="13">
    <original>Q</original>
    <variation>P</variation>
    <location>
        <position position="320"/>
    </location>
</feature>
<feature type="sequence variant" id="VAR_081131" description="In DFNB32." evidence="12">
    <location>
        <begin position="339"/>
        <end position="594"/>
    </location>
</feature>
<feature type="sequence variant" id="VAR_081132" description="In DFNB32." evidence="13">
    <location>
        <begin position="345"/>
        <end position="594"/>
    </location>
</feature>
<feature type="sequence variant" id="VAR_019957" description="In dbSNP:rs28364897." evidence="15">
    <original>R</original>
    <variation>Q</variation>
    <location>
        <position position="345"/>
    </location>
</feature>
<feature type="sequence variant" id="VAR_081133" description="In DFNB32." evidence="12 13">
    <location>
        <begin position="376"/>
        <end position="594"/>
    </location>
</feature>
<feature type="sequence variant" id="VAR_035655" description="In a colorectal cancer sample; somatic mutation." evidence="10">
    <original>D</original>
    <variation>Y</variation>
    <location>
        <position position="493"/>
    </location>
</feature>
<feature type="sequence variant" id="VAR_019958" description="In dbSNP:rs28364923." evidence="15">
    <original>S</original>
    <variation>F</variation>
    <location>
        <position position="589"/>
    </location>
</feature>
<feature type="mutagenesis site" description="Loss of phosphatase activity." evidence="8">
    <original>D</original>
    <variation>A</variation>
    <location>
        <position position="251"/>
    </location>
</feature>
<feature type="mutagenesis site" description="Loss of phosphatase activity." evidence="6 8">
    <original>C</original>
    <variation>S</variation>
    <location>
        <position position="278"/>
    </location>
</feature>
<feature type="mutagenesis site" description="Loss of phosphatase activity." evidence="8">
    <original>R</original>
    <variation>A</variation>
    <location>
        <position position="284"/>
    </location>
</feature>
<feature type="mutagenesis site" description="Inappropriate nucleolar localization; when associated with A-364." evidence="7">
    <original>M</original>
    <variation>A</variation>
    <location>
        <position position="362"/>
    </location>
</feature>
<feature type="mutagenesis site" description="Inappropriate nucleolar localization; when associated with A-362." evidence="7">
    <original>I</original>
    <variation>A</variation>
    <location>
        <position position="364"/>
    </location>
</feature>
<feature type="sequence conflict" description="In Ref. 1; AAB88277." evidence="19" ref="1">
    <original>F</original>
    <variation>I</variation>
    <location>
        <position position="164"/>
    </location>
</feature>
<feature type="sequence conflict" description="In Ref. 1; AAB88277." evidence="19" ref="1">
    <original>W</original>
    <variation>C</variation>
    <location>
        <position position="182"/>
    </location>
</feature>
<evidence type="ECO:0000250" key="1"/>
<evidence type="ECO:0000250" key="2">
    <source>
        <dbReference type="UniProtKB" id="Q6GQT0"/>
    </source>
</evidence>
<evidence type="ECO:0000255" key="3">
    <source>
        <dbReference type="PROSITE-ProRule" id="PRU00160"/>
    </source>
</evidence>
<evidence type="ECO:0000255" key="4">
    <source>
        <dbReference type="PROSITE-ProRule" id="PRU10044"/>
    </source>
</evidence>
<evidence type="ECO:0000256" key="5">
    <source>
        <dbReference type="SAM" id="MobiDB-lite"/>
    </source>
</evidence>
<evidence type="ECO:0000269" key="6">
    <source>
    </source>
</evidence>
<evidence type="ECO:0000269" key="7">
    <source>
    </source>
</evidence>
<evidence type="ECO:0000269" key="8">
    <source>
    </source>
</evidence>
<evidence type="ECO:0000269" key="9">
    <source>
    </source>
</evidence>
<evidence type="ECO:0000269" key="10">
    <source>
    </source>
</evidence>
<evidence type="ECO:0000269" key="11">
    <source>
    </source>
</evidence>
<evidence type="ECO:0000269" key="12">
    <source>
    </source>
</evidence>
<evidence type="ECO:0000269" key="13">
    <source>
    </source>
</evidence>
<evidence type="ECO:0000269" key="14">
    <source>
    </source>
</evidence>
<evidence type="ECO:0000269" key="15">
    <source ref="5"/>
</evidence>
<evidence type="ECO:0000303" key="16">
    <source>
    </source>
</evidence>
<evidence type="ECO:0000303" key="17">
    <source ref="3"/>
</evidence>
<evidence type="ECO:0000303" key="18">
    <source ref="4"/>
</evidence>
<evidence type="ECO:0000305" key="19"/>
<evidence type="ECO:0007744" key="20">
    <source>
    </source>
</evidence>
<reference key="1">
    <citation type="journal article" date="1997" name="J. Biol. Chem.">
        <title>A family of putative tumor suppressors is structurally and functionally conserved in humans and yeast.</title>
        <authorList>
            <person name="Li L."/>
            <person name="Ernsting B.R."/>
            <person name="Wishart M.J."/>
            <person name="Lohse D.L."/>
            <person name="Dixon J.E."/>
        </authorList>
    </citation>
    <scope>NUCLEOTIDE SEQUENCE [MRNA] (ISOFORM 1)</scope>
    <scope>FUNCTION</scope>
    <scope>SUBCELLULAR LOCATION</scope>
</reference>
<reference key="2">
    <citation type="journal article" date="1999" name="Genomics">
        <title>Genomic structure, chromosomal location, and mutation analysis of the human CDC14A gene.</title>
        <authorList>
            <person name="Wong A.K.C."/>
            <person name="Chen Y."/>
            <person name="Lian L."/>
            <person name="Ha P.C."/>
            <person name="Petersen K."/>
            <person name="Laity K."/>
            <person name="Carillo A."/>
            <person name="Emerson M."/>
            <person name="Heichman K."/>
            <person name="Gupte J."/>
            <person name="Tavtigian S.V."/>
            <person name="Teng D.H.-F."/>
        </authorList>
    </citation>
    <scope>NUCLEOTIDE SEQUENCE [MRNA] (ISOFORM 1)</scope>
</reference>
<reference key="3">
    <citation type="submission" date="1998-05" db="EMBL/GenBank/DDBJ databases">
        <authorList>
            <person name="Hao L."/>
            <person name="Baskerville C."/>
            <person name="Charbonneau H."/>
        </authorList>
    </citation>
    <scope>NUCLEOTIDE SEQUENCE [MRNA] (ISOFORMS 2 AND 3)</scope>
    <source>
        <tissue>Placenta</tissue>
    </source>
</reference>
<reference key="4">
    <citation type="submission" date="2006-05" db="EMBL/GenBank/DDBJ databases">
        <title>Human CDC14A splice variant.</title>
        <authorList>
            <person name="Belyaev A.S."/>
            <person name="Kolokithas A."/>
            <person name="Monell C.R."/>
        </authorList>
    </citation>
    <scope>NUCLEOTIDE SEQUENCE [MRNA] (ISOFORM 5)</scope>
</reference>
<reference key="5">
    <citation type="submission" date="2004-05" db="EMBL/GenBank/DDBJ databases">
        <authorList>
            <consortium name="NIEHS SNPs program"/>
        </authorList>
    </citation>
    <scope>NUCLEOTIDE SEQUENCE [GENOMIC DNA]</scope>
    <scope>VARIANTS GLN-345 AND PHE-589</scope>
</reference>
<reference key="6">
    <citation type="journal article" date="2006" name="Nature">
        <title>The DNA sequence and biological annotation of human chromosome 1.</title>
        <authorList>
            <person name="Gregory S.G."/>
            <person name="Barlow K.F."/>
            <person name="McLay K.E."/>
            <person name="Kaul R."/>
            <person name="Swarbreck D."/>
            <person name="Dunham A."/>
            <person name="Scott C.E."/>
            <person name="Howe K.L."/>
            <person name="Woodfine K."/>
            <person name="Spencer C.C.A."/>
            <person name="Jones M.C."/>
            <person name="Gillson C."/>
            <person name="Searle S."/>
            <person name="Zhou Y."/>
            <person name="Kokocinski F."/>
            <person name="McDonald L."/>
            <person name="Evans R."/>
            <person name="Phillips K."/>
            <person name="Atkinson A."/>
            <person name="Cooper R."/>
            <person name="Jones C."/>
            <person name="Hall R.E."/>
            <person name="Andrews T.D."/>
            <person name="Lloyd C."/>
            <person name="Ainscough R."/>
            <person name="Almeida J.P."/>
            <person name="Ambrose K.D."/>
            <person name="Anderson F."/>
            <person name="Andrew R.W."/>
            <person name="Ashwell R.I.S."/>
            <person name="Aubin K."/>
            <person name="Babbage A.K."/>
            <person name="Bagguley C.L."/>
            <person name="Bailey J."/>
            <person name="Beasley H."/>
            <person name="Bethel G."/>
            <person name="Bird C.P."/>
            <person name="Bray-Allen S."/>
            <person name="Brown J.Y."/>
            <person name="Brown A.J."/>
            <person name="Buckley D."/>
            <person name="Burton J."/>
            <person name="Bye J."/>
            <person name="Carder C."/>
            <person name="Chapman J.C."/>
            <person name="Clark S.Y."/>
            <person name="Clarke G."/>
            <person name="Clee C."/>
            <person name="Cobley V."/>
            <person name="Collier R.E."/>
            <person name="Corby N."/>
            <person name="Coville G.J."/>
            <person name="Davies J."/>
            <person name="Deadman R."/>
            <person name="Dunn M."/>
            <person name="Earthrowl M."/>
            <person name="Ellington A.G."/>
            <person name="Errington H."/>
            <person name="Frankish A."/>
            <person name="Frankland J."/>
            <person name="French L."/>
            <person name="Garner P."/>
            <person name="Garnett J."/>
            <person name="Gay L."/>
            <person name="Ghori M.R.J."/>
            <person name="Gibson R."/>
            <person name="Gilby L.M."/>
            <person name="Gillett W."/>
            <person name="Glithero R.J."/>
            <person name="Grafham D.V."/>
            <person name="Griffiths C."/>
            <person name="Griffiths-Jones S."/>
            <person name="Grocock R."/>
            <person name="Hammond S."/>
            <person name="Harrison E.S.I."/>
            <person name="Hart E."/>
            <person name="Haugen E."/>
            <person name="Heath P.D."/>
            <person name="Holmes S."/>
            <person name="Holt K."/>
            <person name="Howden P.J."/>
            <person name="Hunt A.R."/>
            <person name="Hunt S.E."/>
            <person name="Hunter G."/>
            <person name="Isherwood J."/>
            <person name="James R."/>
            <person name="Johnson C."/>
            <person name="Johnson D."/>
            <person name="Joy A."/>
            <person name="Kay M."/>
            <person name="Kershaw J.K."/>
            <person name="Kibukawa M."/>
            <person name="Kimberley A.M."/>
            <person name="King A."/>
            <person name="Knights A.J."/>
            <person name="Lad H."/>
            <person name="Laird G."/>
            <person name="Lawlor S."/>
            <person name="Leongamornlert D.A."/>
            <person name="Lloyd D.M."/>
            <person name="Loveland J."/>
            <person name="Lovell J."/>
            <person name="Lush M.J."/>
            <person name="Lyne R."/>
            <person name="Martin S."/>
            <person name="Mashreghi-Mohammadi M."/>
            <person name="Matthews L."/>
            <person name="Matthews N.S.W."/>
            <person name="McLaren S."/>
            <person name="Milne S."/>
            <person name="Mistry S."/>
            <person name="Moore M.J.F."/>
            <person name="Nickerson T."/>
            <person name="O'Dell C.N."/>
            <person name="Oliver K."/>
            <person name="Palmeiri A."/>
            <person name="Palmer S.A."/>
            <person name="Parker A."/>
            <person name="Patel D."/>
            <person name="Pearce A.V."/>
            <person name="Peck A.I."/>
            <person name="Pelan S."/>
            <person name="Phelps K."/>
            <person name="Phillimore B.J."/>
            <person name="Plumb R."/>
            <person name="Rajan J."/>
            <person name="Raymond C."/>
            <person name="Rouse G."/>
            <person name="Saenphimmachak C."/>
            <person name="Sehra H.K."/>
            <person name="Sheridan E."/>
            <person name="Shownkeen R."/>
            <person name="Sims S."/>
            <person name="Skuce C.D."/>
            <person name="Smith M."/>
            <person name="Steward C."/>
            <person name="Subramanian S."/>
            <person name="Sycamore N."/>
            <person name="Tracey A."/>
            <person name="Tromans A."/>
            <person name="Van Helmond Z."/>
            <person name="Wall M."/>
            <person name="Wallis J.M."/>
            <person name="White S."/>
            <person name="Whitehead S.L."/>
            <person name="Wilkinson J.E."/>
            <person name="Willey D.L."/>
            <person name="Williams H."/>
            <person name="Wilming L."/>
            <person name="Wray P.W."/>
            <person name="Wu Z."/>
            <person name="Coulson A."/>
            <person name="Vaudin M."/>
            <person name="Sulston J.E."/>
            <person name="Durbin R.M."/>
            <person name="Hubbard T."/>
            <person name="Wooster R."/>
            <person name="Dunham I."/>
            <person name="Carter N.P."/>
            <person name="McVean G."/>
            <person name="Ross M.T."/>
            <person name="Harrow J."/>
            <person name="Olson M.V."/>
            <person name="Beck S."/>
            <person name="Rogers J."/>
            <person name="Bentley D.R."/>
        </authorList>
    </citation>
    <scope>NUCLEOTIDE SEQUENCE [LARGE SCALE GENOMIC DNA]</scope>
</reference>
<reference key="7">
    <citation type="submission" date="2005-09" db="EMBL/GenBank/DDBJ databases">
        <authorList>
            <person name="Mural R.J."/>
            <person name="Istrail S."/>
            <person name="Sutton G.G."/>
            <person name="Florea L."/>
            <person name="Halpern A.L."/>
            <person name="Mobarry C.M."/>
            <person name="Lippert R."/>
            <person name="Walenz B."/>
            <person name="Shatkay H."/>
            <person name="Dew I."/>
            <person name="Miller J.R."/>
            <person name="Flanigan M.J."/>
            <person name="Edwards N.J."/>
            <person name="Bolanos R."/>
            <person name="Fasulo D."/>
            <person name="Halldorsson B.V."/>
            <person name="Hannenhalli S."/>
            <person name="Turner R."/>
            <person name="Yooseph S."/>
            <person name="Lu F."/>
            <person name="Nusskern D.R."/>
            <person name="Shue B.C."/>
            <person name="Zheng X.H."/>
            <person name="Zhong F."/>
            <person name="Delcher A.L."/>
            <person name="Huson D.H."/>
            <person name="Kravitz S.A."/>
            <person name="Mouchard L."/>
            <person name="Reinert K."/>
            <person name="Remington K.A."/>
            <person name="Clark A.G."/>
            <person name="Waterman M.S."/>
            <person name="Eichler E.E."/>
            <person name="Adams M.D."/>
            <person name="Hunkapiller M.W."/>
            <person name="Myers E.W."/>
            <person name="Venter J.C."/>
        </authorList>
    </citation>
    <scope>NUCLEOTIDE SEQUENCE [LARGE SCALE GENOMIC DNA]</scope>
</reference>
<reference key="8">
    <citation type="journal article" date="2004" name="Genome Res.">
        <title>The status, quality, and expansion of the NIH full-length cDNA project: the Mammalian Gene Collection (MGC).</title>
        <authorList>
            <consortium name="The MGC Project Team"/>
        </authorList>
    </citation>
    <scope>NUCLEOTIDE SEQUENCE [LARGE SCALE MRNA] (ISOFORMS 3 AND 4)</scope>
    <source>
        <tissue>Brain</tissue>
    </source>
</reference>
<reference key="9">
    <citation type="journal article" date="2001" name="J. Biol. Chem.">
        <title>Regulation of the anaphase-promoting complex by the dual specificity phosphatase human Cdc14a.</title>
        <authorList>
            <person name="Bembenek J."/>
            <person name="Yu H."/>
        </authorList>
    </citation>
    <scope>DEPHOSPHORYLATION OF FZR1</scope>
    <scope>SUBCELLULAR LOCATION</scope>
    <scope>MUTAGENESIS OF CYS-278</scope>
</reference>
<reference key="10">
    <citation type="journal article" date="2002" name="Mol. Biol. Cell">
        <title>Disruption of centrosome structure, chromosome segregation, and cytokinesis by misexpression of human Cdc14A phosphatase.</title>
        <authorList>
            <person name="Kaiser B.K."/>
            <person name="Zimmerman Z.A."/>
            <person name="Charbonneau H."/>
            <person name="Jackson P.K."/>
        </authorList>
    </citation>
    <scope>SUBSTRATE SPECIFICITY</scope>
    <scope>FUNCTION</scope>
    <scope>SUBCELLULAR LOCATION</scope>
    <scope>MUTAGENESIS OF ASP-251; CYS-278 AND ARG-284</scope>
</reference>
<reference key="11">
    <citation type="journal article" date="2002" name="Nat. Cell Biol.">
        <title>Deregulated human Cdc14A phosphatase disrupts centrosome separation and chromosome segregation.</title>
        <authorList>
            <person name="Mailand N."/>
            <person name="Lukas C."/>
            <person name="Kaiser B.K."/>
            <person name="Jackson P.K."/>
            <person name="Bartek J."/>
            <person name="Lukas J."/>
        </authorList>
    </citation>
    <scope>FUNCTION</scope>
    <scope>SUBCELLULAR LOCATION</scope>
    <scope>MUTAGENESIS OF MET-362 AND ILE-364</scope>
</reference>
<reference key="12">
    <citation type="journal article" date="2004" name="J. Cell Biol.">
        <title>Relocation of Aurora B from centromeres to the central spindle at the metaphase to anaphase transition requires MKlp2.</title>
        <authorList>
            <person name="Gruneberg U."/>
            <person name="Neef R."/>
            <person name="Honda R."/>
            <person name="Nigg E.A."/>
            <person name="Barr F.A."/>
        </authorList>
    </citation>
    <scope>INTERACTION WITH KIF20A</scope>
    <scope>SUBCELLULAR LOCATION</scope>
</reference>
<reference key="13">
    <citation type="journal article" date="2007" name="J. Biol. Chem.">
        <title>Mitotic regulation of SIRT2 by cyclin-dependent kinase 1-dependent phosphorylation.</title>
        <authorList>
            <person name="North B.J."/>
            <person name="Verdin E."/>
        </authorList>
    </citation>
    <scope>FUNCTION AS SIRT2 PHOSPHATASE</scope>
</reference>
<reference key="14">
    <citation type="journal article" date="2013" name="J. Proteome Res.">
        <title>Toward a comprehensive characterization of a human cancer cell phosphoproteome.</title>
        <authorList>
            <person name="Zhou H."/>
            <person name="Di Palma S."/>
            <person name="Preisinger C."/>
            <person name="Peng M."/>
            <person name="Polat A.N."/>
            <person name="Heck A.J."/>
            <person name="Mohammed S."/>
        </authorList>
    </citation>
    <scope>PHOSPHORYLATION [LARGE SCALE ANALYSIS] AT SER-484 AND SER-583</scope>
    <scope>IDENTIFICATION BY MASS SPECTROMETRY [LARGE SCALE ANALYSIS]</scope>
    <source>
        <tissue>Erythroleukemia</tissue>
    </source>
</reference>
<reference key="15">
    <citation type="journal article" date="2016" name="Am. J. Hum. Genet.">
        <title>Mutations in CDC14A, encoding a protein phosphatase involved in hair cell ciliogenesis, cause autosomal-recessive severe to profound deafness.</title>
        <authorList>
            <person name="Delmaghani S."/>
            <person name="Aghaie A."/>
            <person name="Bouyacoub Y."/>
            <person name="El Hachmi H."/>
            <person name="Bonnet C."/>
            <person name="Riahi Z."/>
            <person name="Chardenoux S."/>
            <person name="Perfettini I."/>
            <person name="Hardelin J.P."/>
            <person name="Houmeida A."/>
            <person name="Herbomel P."/>
            <person name="Petit C."/>
        </authorList>
    </citation>
    <scope>INVOLVEMENT IN DFNB32</scope>
    <scope>VARIANTS DFNB32 339-ARG--TYR-594 DEL AND 376-ARG--TYR-594 DEL</scope>
</reference>
<reference key="16">
    <citation type="journal article" date="2018" name="Hum. Mol. Genet.">
        <title>CDC14A phosphatase is essential for hearing and male fertility in mouse and human.</title>
        <authorList>
            <person name="Imtiaz A."/>
            <person name="Belyantseva I.A."/>
            <person name="Beirl A.J."/>
            <person name="Fenollar-Ferrer C."/>
            <person name="Bashir R."/>
            <person name="Bukhari I."/>
            <person name="Bouzid A."/>
            <person name="Shaukat U."/>
            <person name="Azaiez H."/>
            <person name="Booth K.T."/>
            <person name="Kahrizi K."/>
            <person name="Najmabadi H."/>
            <person name="Maqsood A."/>
            <person name="Wilson E.A."/>
            <person name="Fitzgerald T.S."/>
            <person name="Tlili A."/>
            <person name="Olszewski R."/>
            <person name="Lund M."/>
            <person name="Chaudhry T."/>
            <person name="Rehman A.U."/>
            <person name="Starost M.F."/>
            <person name="Waryah A.M."/>
            <person name="Hoa M."/>
            <person name="Dong L."/>
            <person name="Morell R.J."/>
            <person name="Smith R.J.H."/>
            <person name="Riazuddin S."/>
            <person name="Masmoudi S."/>
            <person name="Kindt K.S."/>
            <person name="Naz S."/>
            <person name="Friedman T.B."/>
        </authorList>
    </citation>
    <scope>FUNCTION</scope>
    <scope>VARIANTS DFNB32 139-TYR--TYR-594 DEL; GLN-312; GLY-312; PRO-320; 345-ARG--TYR-594 DEL AND 376-ARG--TYR-594 DEL</scope>
    <scope>INVOLVEMENT IN DFNB32</scope>
</reference>
<reference key="17">
    <citation type="journal article" date="2006" name="Science">
        <title>The consensus coding sequences of human breast and colorectal cancers.</title>
        <authorList>
            <person name="Sjoeblom T."/>
            <person name="Jones S."/>
            <person name="Wood L.D."/>
            <person name="Parsons D.W."/>
            <person name="Lin J."/>
            <person name="Barber T.D."/>
            <person name="Mandelker D."/>
            <person name="Leary R.J."/>
            <person name="Ptak J."/>
            <person name="Silliman N."/>
            <person name="Szabo S."/>
            <person name="Buckhaults P."/>
            <person name="Farrell C."/>
            <person name="Meeh P."/>
            <person name="Markowitz S.D."/>
            <person name="Willis J."/>
            <person name="Dawson D."/>
            <person name="Willson J.K.V."/>
            <person name="Gazdar A.F."/>
            <person name="Hartigan J."/>
            <person name="Wu L."/>
            <person name="Liu C."/>
            <person name="Parmigiani G."/>
            <person name="Park B.H."/>
            <person name="Bachman K.E."/>
            <person name="Papadopoulos N."/>
            <person name="Vogelstein B."/>
            <person name="Kinzler K.W."/>
            <person name="Velculescu V.E."/>
        </authorList>
    </citation>
    <scope>VARIANT [LARGE SCALE ANALYSIS] TYR-493</scope>
</reference>
<proteinExistence type="evidence at protein level"/>
<keyword id="KW-0025">Alternative splicing</keyword>
<keyword id="KW-0131">Cell cycle</keyword>
<keyword id="KW-0132">Cell division</keyword>
<keyword id="KW-0966">Cell projection</keyword>
<keyword id="KW-0963">Cytoplasm</keyword>
<keyword id="KW-0206">Cytoskeleton</keyword>
<keyword id="KW-0209">Deafness</keyword>
<keyword id="KW-0225">Disease variant</keyword>
<keyword id="KW-1009">Hearing</keyword>
<keyword id="KW-0378">Hydrolase</keyword>
<keyword id="KW-1010">Non-syndromic deafness</keyword>
<keyword id="KW-0539">Nucleus</keyword>
<keyword id="KW-0597">Phosphoprotein</keyword>
<keyword id="KW-0904">Protein phosphatase</keyword>
<keyword id="KW-1267">Proteomics identification</keyword>
<keyword id="KW-1185">Reference proteome</keyword>
<protein>
    <recommendedName>
        <fullName>Dual specificity protein phosphatase CDC14A</fullName>
        <ecNumber>3.1.3.16</ecNumber>
        <ecNumber>3.1.3.48</ecNumber>
    </recommendedName>
    <alternativeName>
        <fullName>CDC14 cell division cycle 14 homolog A</fullName>
    </alternativeName>
</protein>
<gene>
    <name type="primary">CDC14A</name>
</gene>
<sequence length="594" mass="66574">MAAESGELIGACEFMKDRLYFATLRNRPKSTVNTHYFSIDEELVYENFYADFGPLNLAMVYRYCCKLNKKLKSYSLSRKKIVHYTCFDQRKRANAAFLIGAYAVIYLKKTPEEAYRALLSGSNPPYLPFRDASFGNCTYNLTILDCLQGIRKGLQHGFFDFETFDVDEYEHYERVENGDFNWIVPGKFLAFSGPHPKSKIENGYPLHAPEAYFPYFKKHNVTAVVRLNKKIYEAKRFTDAGFEHYDLFFIDGSTPSDNIVRRFLNICENTEGAIAVHCKAGLGRTGTLIACYVMKHYRFTHAEIIAWIRICRPGSIIGPQQHFLEEKQASLWVQGDIFRSKLKNRPSSEGSINKILSGLDDMSIGGNLSKTQNMERFGEDNLEDDDVEMKNGITQGDKLRALKSQRQPRTSPSCAFRSDDTKGHPRAVSQPFRLSSSLQGSAVTLKTSKMALSPSATAKRINRTSLSSGATVRSFSINSRLASSLGNLNAATDDPENKKTSSSSKAGFTASPFTNLLNGSSQPTTRNYPELNNNQYNRSSNSNGGNLNSPPGPHSAKTEEHTTILRPSYTGLSSSSARFLSRSIPSLQSEYVHY</sequence>
<name>CC14A_HUMAN</name>
<dbReference type="EC" id="3.1.3.16"/>
<dbReference type="EC" id="3.1.3.48"/>
<dbReference type="EMBL" id="AF000367">
    <property type="protein sequence ID" value="AAB88277.1"/>
    <property type="status" value="ALT_FRAME"/>
    <property type="molecule type" value="mRNA"/>
</dbReference>
<dbReference type="EMBL" id="AF122013">
    <property type="protein sequence ID" value="AAD49217.1"/>
    <property type="molecule type" value="mRNA"/>
</dbReference>
<dbReference type="EMBL" id="AF064102">
    <property type="protein sequence ID" value="AAC16659.1"/>
    <property type="molecule type" value="mRNA"/>
</dbReference>
<dbReference type="EMBL" id="AF064103">
    <property type="protein sequence ID" value="AAC16660.1"/>
    <property type="molecule type" value="mRNA"/>
</dbReference>
<dbReference type="EMBL" id="DQ530256">
    <property type="protein sequence ID" value="ABF74568.1"/>
    <property type="molecule type" value="mRNA"/>
</dbReference>
<dbReference type="EMBL" id="AY623111">
    <property type="protein sequence ID" value="AAT38107.1"/>
    <property type="molecule type" value="Genomic_DNA"/>
</dbReference>
<dbReference type="EMBL" id="AC104457">
    <property type="status" value="NOT_ANNOTATED_CDS"/>
    <property type="molecule type" value="Genomic_DNA"/>
</dbReference>
<dbReference type="EMBL" id="AL589990">
    <property type="status" value="NOT_ANNOTATED_CDS"/>
    <property type="molecule type" value="Genomic_DNA"/>
</dbReference>
<dbReference type="EMBL" id="CH471097">
    <property type="protein sequence ID" value="EAW72956.1"/>
    <property type="molecule type" value="Genomic_DNA"/>
</dbReference>
<dbReference type="EMBL" id="CH471097">
    <property type="protein sequence ID" value="EAW72958.1"/>
    <property type="molecule type" value="Genomic_DNA"/>
</dbReference>
<dbReference type="EMBL" id="CH471097">
    <property type="protein sequence ID" value="EAW72959.1"/>
    <property type="molecule type" value="Genomic_DNA"/>
</dbReference>
<dbReference type="EMBL" id="BC038979">
    <property type="protein sequence ID" value="AAH38979.1"/>
    <property type="molecule type" value="mRNA"/>
</dbReference>
<dbReference type="EMBL" id="BC093916">
    <property type="protein sequence ID" value="AAH93916.1"/>
    <property type="molecule type" value="mRNA"/>
</dbReference>
<dbReference type="EMBL" id="BC093918">
    <property type="protein sequence ID" value="AAH93918.1"/>
    <property type="molecule type" value="mRNA"/>
</dbReference>
<dbReference type="CCDS" id="CCDS769.1">
    <molecule id="Q9UNH5-1"/>
</dbReference>
<dbReference type="CCDS" id="CCDS770.1">
    <molecule id="Q9UNH5-2"/>
</dbReference>
<dbReference type="CCDS" id="CCDS771.1">
    <molecule id="Q9UNH5-3"/>
</dbReference>
<dbReference type="CCDS" id="CCDS86000.1">
    <molecule id="Q9UNH5-5"/>
</dbReference>
<dbReference type="RefSeq" id="NP_001306139.1">
    <molecule id="Q9UNH5-5"/>
    <property type="nucleotide sequence ID" value="NM_001319210.2"/>
</dbReference>
<dbReference type="RefSeq" id="NP_001306140.1">
    <property type="nucleotide sequence ID" value="NM_001319211.1"/>
</dbReference>
<dbReference type="RefSeq" id="NP_001306141.1">
    <property type="nucleotide sequence ID" value="NM_001319212.1"/>
</dbReference>
<dbReference type="RefSeq" id="NP_003663.2">
    <molecule id="Q9UNH5-1"/>
    <property type="nucleotide sequence ID" value="NM_003672.3"/>
</dbReference>
<dbReference type="RefSeq" id="NP_201569.1">
    <molecule id="Q9UNH5-2"/>
    <property type="nucleotide sequence ID" value="NM_033312.3"/>
</dbReference>
<dbReference type="RefSeq" id="NP_201570.1">
    <molecule id="Q9UNH5-3"/>
    <property type="nucleotide sequence ID" value="NM_033313.3"/>
</dbReference>
<dbReference type="SMR" id="Q9UNH5"/>
<dbReference type="BioGRID" id="114126">
    <property type="interactions" value="112"/>
</dbReference>
<dbReference type="FunCoup" id="Q9UNH5">
    <property type="interactions" value="852"/>
</dbReference>
<dbReference type="IntAct" id="Q9UNH5">
    <property type="interactions" value="51"/>
</dbReference>
<dbReference type="MINT" id="Q9UNH5"/>
<dbReference type="STRING" id="9606.ENSP00000354916"/>
<dbReference type="BindingDB" id="Q9UNH5"/>
<dbReference type="ChEMBL" id="CHEMBL1772926"/>
<dbReference type="DEPOD" id="CDC14A"/>
<dbReference type="iPTMnet" id="Q9UNH5"/>
<dbReference type="PhosphoSitePlus" id="Q9UNH5"/>
<dbReference type="BioMuta" id="CDC14A"/>
<dbReference type="DMDM" id="55976620"/>
<dbReference type="jPOST" id="Q9UNH5"/>
<dbReference type="MassIVE" id="Q9UNH5"/>
<dbReference type="PaxDb" id="9606-ENSP00000354916"/>
<dbReference type="PeptideAtlas" id="Q9UNH5"/>
<dbReference type="ProteomicsDB" id="792"/>
<dbReference type="ProteomicsDB" id="85289">
    <molecule id="Q9UNH5-1"/>
</dbReference>
<dbReference type="ProteomicsDB" id="85290">
    <molecule id="Q9UNH5-2"/>
</dbReference>
<dbReference type="ProteomicsDB" id="85291">
    <molecule id="Q9UNH5-3"/>
</dbReference>
<dbReference type="Pumba" id="Q9UNH5"/>
<dbReference type="Antibodypedia" id="19991">
    <property type="antibodies" value="316 antibodies from 32 providers"/>
</dbReference>
<dbReference type="DNASU" id="8556"/>
<dbReference type="Ensembl" id="ENST00000336454.5">
    <molecule id="Q9UNH5-1"/>
    <property type="protein sequence ID" value="ENSP00000336739.3"/>
    <property type="gene ID" value="ENSG00000079335.21"/>
</dbReference>
<dbReference type="Ensembl" id="ENST00000361544.11">
    <molecule id="Q9UNH5-2"/>
    <property type="protein sequence ID" value="ENSP00000354916.6"/>
    <property type="gene ID" value="ENSG00000079335.21"/>
</dbReference>
<dbReference type="Ensembl" id="ENST00000370124.8">
    <molecule id="Q9UNH5-3"/>
    <property type="protein sequence ID" value="ENSP00000359142.3"/>
    <property type="gene ID" value="ENSG00000079335.21"/>
</dbReference>
<dbReference type="Ensembl" id="ENST00000644813.1">
    <molecule id="Q9UNH5-5"/>
    <property type="protein sequence ID" value="ENSP00000496374.1"/>
    <property type="gene ID" value="ENSG00000079335.21"/>
</dbReference>
<dbReference type="GeneID" id="8556"/>
<dbReference type="KEGG" id="hsa:8556"/>
<dbReference type="MANE-Select" id="ENST00000336454.5">
    <property type="protein sequence ID" value="ENSP00000336739.3"/>
    <property type="RefSeq nucleotide sequence ID" value="NM_003672.4"/>
    <property type="RefSeq protein sequence ID" value="NP_003663.2"/>
</dbReference>
<dbReference type="UCSC" id="uc001dte.5">
    <molecule id="Q9UNH5-1"/>
    <property type="organism name" value="human"/>
</dbReference>
<dbReference type="AGR" id="HGNC:1718"/>
<dbReference type="CTD" id="8556"/>
<dbReference type="DisGeNET" id="8556"/>
<dbReference type="GeneCards" id="CDC14A"/>
<dbReference type="HGNC" id="HGNC:1718">
    <property type="gene designation" value="CDC14A"/>
</dbReference>
<dbReference type="HPA" id="ENSG00000079335">
    <property type="expression patterns" value="Tissue enhanced (testis)"/>
</dbReference>
<dbReference type="MalaCards" id="CDC14A"/>
<dbReference type="MIM" id="603504">
    <property type="type" value="gene"/>
</dbReference>
<dbReference type="MIM" id="608653">
    <property type="type" value="phenotype"/>
</dbReference>
<dbReference type="neXtProt" id="NX_Q9UNH5"/>
<dbReference type="OpenTargets" id="ENSG00000079335"/>
<dbReference type="Orphanet" id="90636">
    <property type="disease" value="Rare autosomal recessive non-syndromic sensorineural deafness type DFNB"/>
</dbReference>
<dbReference type="PharmGKB" id="PA26254"/>
<dbReference type="VEuPathDB" id="HostDB:ENSG00000079335"/>
<dbReference type="eggNOG" id="KOG1720">
    <property type="taxonomic scope" value="Eukaryota"/>
</dbReference>
<dbReference type="GeneTree" id="ENSGT00940000155899"/>
<dbReference type="HOGENOM" id="CLU_017787_0_2_1"/>
<dbReference type="InParanoid" id="Q9UNH5"/>
<dbReference type="OMA" id="YRFTHTE"/>
<dbReference type="OrthoDB" id="266663at2759"/>
<dbReference type="PAN-GO" id="Q9UNH5">
    <property type="GO annotations" value="12 GO annotations based on evolutionary models"/>
</dbReference>
<dbReference type="PhylomeDB" id="Q9UNH5"/>
<dbReference type="TreeFam" id="TF101053"/>
<dbReference type="PathwayCommons" id="Q9UNH5"/>
<dbReference type="Reactome" id="R-HSA-176407">
    <property type="pathway name" value="Conversion from APC/C:Cdc20 to APC/C:Cdh1 in late anaphase"/>
</dbReference>
<dbReference type="Reactome" id="R-HSA-5687128">
    <property type="pathway name" value="MAPK6/MAPK4 signaling"/>
</dbReference>
<dbReference type="SignaLink" id="Q9UNH5"/>
<dbReference type="SIGNOR" id="Q9UNH5"/>
<dbReference type="BioGRID-ORCS" id="8556">
    <property type="hits" value="13 hits in 1188 CRISPR screens"/>
</dbReference>
<dbReference type="CD-CODE" id="8C2F96ED">
    <property type="entry name" value="Centrosome"/>
</dbReference>
<dbReference type="ChiTaRS" id="CDC14A">
    <property type="organism name" value="human"/>
</dbReference>
<dbReference type="GeneWiki" id="CDC14A"/>
<dbReference type="GenomeRNAi" id="8556"/>
<dbReference type="Pharos" id="Q9UNH5">
    <property type="development level" value="Tbio"/>
</dbReference>
<dbReference type="PRO" id="PR:Q9UNH5"/>
<dbReference type="Proteomes" id="UP000005640">
    <property type="component" value="Chromosome 1"/>
</dbReference>
<dbReference type="RNAct" id="Q9UNH5">
    <property type="molecule type" value="protein"/>
</dbReference>
<dbReference type="Bgee" id="ENSG00000079335">
    <property type="expression patterns" value="Expressed in sperm and 147 other cell types or tissues"/>
</dbReference>
<dbReference type="ExpressionAtlas" id="Q9UNH5">
    <property type="expression patterns" value="baseline and differential"/>
</dbReference>
<dbReference type="GO" id="GO:0005813">
    <property type="term" value="C:centrosome"/>
    <property type="evidence" value="ECO:0000314"/>
    <property type="project" value="UniProtKB"/>
</dbReference>
<dbReference type="GO" id="GO:0005737">
    <property type="term" value="C:cytoplasm"/>
    <property type="evidence" value="ECO:0000318"/>
    <property type="project" value="GO_Central"/>
</dbReference>
<dbReference type="GO" id="GO:0005829">
    <property type="term" value="C:cytosol"/>
    <property type="evidence" value="ECO:0000314"/>
    <property type="project" value="HPA"/>
</dbReference>
<dbReference type="GO" id="GO:0005783">
    <property type="term" value="C:endoplasmic reticulum"/>
    <property type="evidence" value="ECO:0000314"/>
    <property type="project" value="HPA"/>
</dbReference>
<dbReference type="GO" id="GO:1902636">
    <property type="term" value="C:kinociliary basal body"/>
    <property type="evidence" value="ECO:0000250"/>
    <property type="project" value="UniProtKB"/>
</dbReference>
<dbReference type="GO" id="GO:0060091">
    <property type="term" value="C:kinocilium"/>
    <property type="evidence" value="ECO:0000250"/>
    <property type="project" value="UniProtKB"/>
</dbReference>
<dbReference type="GO" id="GO:0072686">
    <property type="term" value="C:mitotic spindle"/>
    <property type="evidence" value="ECO:0000318"/>
    <property type="project" value="GO_Central"/>
</dbReference>
<dbReference type="GO" id="GO:0005730">
    <property type="term" value="C:nucleolus"/>
    <property type="evidence" value="ECO:0000318"/>
    <property type="project" value="GO_Central"/>
</dbReference>
<dbReference type="GO" id="GO:0005654">
    <property type="term" value="C:nucleoplasm"/>
    <property type="evidence" value="ECO:0000314"/>
    <property type="project" value="HPA"/>
</dbReference>
<dbReference type="GO" id="GO:0000922">
    <property type="term" value="C:spindle pole"/>
    <property type="evidence" value="ECO:0000318"/>
    <property type="project" value="GO_Central"/>
</dbReference>
<dbReference type="GO" id="GO:0032426">
    <property type="term" value="C:stereocilium tip"/>
    <property type="evidence" value="ECO:0000250"/>
    <property type="project" value="UniProtKB"/>
</dbReference>
<dbReference type="GO" id="GO:0004722">
    <property type="term" value="F:protein serine/threonine phosphatase activity"/>
    <property type="evidence" value="ECO:0000318"/>
    <property type="project" value="GO_Central"/>
</dbReference>
<dbReference type="GO" id="GO:0004725">
    <property type="term" value="F:protein tyrosine phosphatase activity"/>
    <property type="evidence" value="ECO:0000318"/>
    <property type="project" value="GO_Central"/>
</dbReference>
<dbReference type="GO" id="GO:0051301">
    <property type="term" value="P:cell division"/>
    <property type="evidence" value="ECO:0007669"/>
    <property type="project" value="UniProtKB-KW"/>
</dbReference>
<dbReference type="GO" id="GO:0060271">
    <property type="term" value="P:cilium assembly"/>
    <property type="evidence" value="ECO:0000318"/>
    <property type="project" value="GO_Central"/>
</dbReference>
<dbReference type="GO" id="GO:0000226">
    <property type="term" value="P:microtubule cytoskeleton organization"/>
    <property type="evidence" value="ECO:0000318"/>
    <property type="project" value="GO_Central"/>
</dbReference>
<dbReference type="GO" id="GO:0032467">
    <property type="term" value="P:positive regulation of cytokinesis"/>
    <property type="evidence" value="ECO:0000318"/>
    <property type="project" value="GO_Central"/>
</dbReference>
<dbReference type="GO" id="GO:0007096">
    <property type="term" value="P:regulation of exit from mitosis"/>
    <property type="evidence" value="ECO:0000318"/>
    <property type="project" value="GO_Central"/>
</dbReference>
<dbReference type="GO" id="GO:0007605">
    <property type="term" value="P:sensory perception of sound"/>
    <property type="evidence" value="ECO:0000315"/>
    <property type="project" value="UniProtKB"/>
</dbReference>
<dbReference type="CDD" id="cd14499">
    <property type="entry name" value="CDC14_C"/>
    <property type="match status" value="1"/>
</dbReference>
<dbReference type="CDD" id="cd17657">
    <property type="entry name" value="CDC14_N"/>
    <property type="match status" value="1"/>
</dbReference>
<dbReference type="FunFam" id="3.90.190.10:FF:000032">
    <property type="entry name" value="dual specificity protein phosphatase CDC14A isoform X1"/>
    <property type="match status" value="1"/>
</dbReference>
<dbReference type="FunFam" id="3.90.190.10:FF:000006">
    <property type="entry name" value="Dual specificity protein phosphatase CDC14B"/>
    <property type="match status" value="1"/>
</dbReference>
<dbReference type="Gene3D" id="3.90.190.10">
    <property type="entry name" value="Protein tyrosine phosphatase superfamily"/>
    <property type="match status" value="2"/>
</dbReference>
<dbReference type="InterPro" id="IPR044506">
    <property type="entry name" value="CDC14_C"/>
</dbReference>
<dbReference type="InterPro" id="IPR029260">
    <property type="entry name" value="DSPn"/>
</dbReference>
<dbReference type="InterPro" id="IPR029021">
    <property type="entry name" value="Prot-tyrosine_phosphatase-like"/>
</dbReference>
<dbReference type="InterPro" id="IPR050561">
    <property type="entry name" value="PTP"/>
</dbReference>
<dbReference type="InterPro" id="IPR016130">
    <property type="entry name" value="Tyr_Pase_AS"/>
</dbReference>
<dbReference type="InterPro" id="IPR003595">
    <property type="entry name" value="Tyr_Pase_cat"/>
</dbReference>
<dbReference type="InterPro" id="IPR000387">
    <property type="entry name" value="Tyr_Pase_dom"/>
</dbReference>
<dbReference type="InterPro" id="IPR020422">
    <property type="entry name" value="TYR_PHOSPHATASE_DUAL_dom"/>
</dbReference>
<dbReference type="PANTHER" id="PTHR23339">
    <property type="entry name" value="TYROSINE SPECIFIC PROTEIN PHOSPHATASE AND DUAL SPECIFICITY PROTEIN PHOSPHATASE"/>
    <property type="match status" value="1"/>
</dbReference>
<dbReference type="Pfam" id="PF14671">
    <property type="entry name" value="DSPn"/>
    <property type="match status" value="1"/>
</dbReference>
<dbReference type="Pfam" id="PF22785">
    <property type="entry name" value="Tc-R-P"/>
    <property type="match status" value="1"/>
</dbReference>
<dbReference type="SMART" id="SM00195">
    <property type="entry name" value="DSPc"/>
    <property type="match status" value="1"/>
</dbReference>
<dbReference type="SMART" id="SM00404">
    <property type="entry name" value="PTPc_motif"/>
    <property type="match status" value="1"/>
</dbReference>
<dbReference type="SUPFAM" id="SSF52799">
    <property type="entry name" value="(Phosphotyrosine protein) phosphatases II"/>
    <property type="match status" value="2"/>
</dbReference>
<dbReference type="PROSITE" id="PS00383">
    <property type="entry name" value="TYR_PHOSPHATASE_1"/>
    <property type="match status" value="1"/>
</dbReference>
<dbReference type="PROSITE" id="PS50056">
    <property type="entry name" value="TYR_PHOSPHATASE_2"/>
    <property type="match status" value="1"/>
</dbReference>
<dbReference type="PROSITE" id="PS50054">
    <property type="entry name" value="TYR_PHOSPHATASE_DUAL"/>
    <property type="match status" value="1"/>
</dbReference>
<accession>Q9UNH5</accession>
<accession>A6MA65</accession>
<accession>B1AQ14</accession>
<accession>B1AQ15</accession>
<accession>O43171</accession>
<accession>O60727</accession>
<accession>O60728</accession>
<accession>Q52LH9</accession>
<accession>Q8IXX0</accession>